<feature type="chain" id="PRO_0000364986" description="Ferredoxin--NADP reductase">
    <location>
        <begin position="1"/>
        <end position="305"/>
    </location>
</feature>
<feature type="binding site" evidence="1">
    <location>
        <position position="31"/>
    </location>
    <ligand>
        <name>FAD</name>
        <dbReference type="ChEBI" id="CHEBI:57692"/>
    </ligand>
</feature>
<feature type="binding site" evidence="1">
    <location>
        <position position="42"/>
    </location>
    <ligand>
        <name>FAD</name>
        <dbReference type="ChEBI" id="CHEBI:57692"/>
    </ligand>
</feature>
<feature type="binding site" evidence="1">
    <location>
        <position position="82"/>
    </location>
    <ligand>
        <name>FAD</name>
        <dbReference type="ChEBI" id="CHEBI:57692"/>
    </ligand>
</feature>
<feature type="binding site" evidence="1">
    <location>
        <position position="274"/>
    </location>
    <ligand>
        <name>FAD</name>
        <dbReference type="ChEBI" id="CHEBI:57692"/>
    </ligand>
</feature>
<accession>A8AA47</accession>
<gene>
    <name type="ordered locus">Igni_0617</name>
</gene>
<organism>
    <name type="scientific">Ignicoccus hospitalis (strain KIN4/I / DSM 18386 / JCM 14125)</name>
    <dbReference type="NCBI Taxonomy" id="453591"/>
    <lineage>
        <taxon>Archaea</taxon>
        <taxon>Thermoproteota</taxon>
        <taxon>Thermoprotei</taxon>
        <taxon>Desulfurococcales</taxon>
        <taxon>Desulfurococcaceae</taxon>
        <taxon>Ignicoccus</taxon>
    </lineage>
</organism>
<protein>
    <recommendedName>
        <fullName evidence="1">Ferredoxin--NADP reductase</fullName>
        <shortName evidence="1">FNR</shortName>
        <shortName evidence="1">Fd-NADP(+) reductase</shortName>
        <ecNumber evidence="1">1.18.1.2</ecNumber>
    </recommendedName>
</protein>
<sequence>MRDALVVGAGPAGLTAAATLKQYGVEPLVIEAERVMATVYSYAWKPVENYPGFDGKRAIEIARAFEEMQKFFGVEVVEKERVVKAWKEGDKIVLGTQSGNEYEGKVLIIAIGILGKPRRLGIPNEDAPNVHYIVKDPTAFAGSKVVVVGGGDTAVDTATVLAESGAQVTIVHRRDQFRAPMRSIERMVRAGVKMVLNSVPKEIIAKDGKATALVVTHKEGGETVLPLDHLVISIGFEPPDLEWVKSLGVNMRGKEILVDDKMRTNVKGVFAAGDITPAPKRILVAAAQGYIAGFTAFRYIRTGVW</sequence>
<comment type="catalytic activity">
    <reaction evidence="1">
        <text>2 reduced [2Fe-2S]-[ferredoxin] + NADP(+) + H(+) = 2 oxidized [2Fe-2S]-[ferredoxin] + NADPH</text>
        <dbReference type="Rhea" id="RHEA:20125"/>
        <dbReference type="Rhea" id="RHEA-COMP:10000"/>
        <dbReference type="Rhea" id="RHEA-COMP:10001"/>
        <dbReference type="ChEBI" id="CHEBI:15378"/>
        <dbReference type="ChEBI" id="CHEBI:33737"/>
        <dbReference type="ChEBI" id="CHEBI:33738"/>
        <dbReference type="ChEBI" id="CHEBI:57783"/>
        <dbReference type="ChEBI" id="CHEBI:58349"/>
        <dbReference type="EC" id="1.18.1.2"/>
    </reaction>
</comment>
<comment type="cofactor">
    <cofactor evidence="1">
        <name>FAD</name>
        <dbReference type="ChEBI" id="CHEBI:57692"/>
    </cofactor>
    <text evidence="1">Binds 1 FAD per subunit.</text>
</comment>
<comment type="subunit">
    <text evidence="1">Homodimer.</text>
</comment>
<comment type="similarity">
    <text evidence="1">Belongs to the ferredoxin--NADP reductase type 2 family.</text>
</comment>
<name>FENR_IGNH4</name>
<reference key="1">
    <citation type="journal article" date="2008" name="Genome Biol.">
        <title>A genomic analysis of the archaeal system Ignicoccus hospitalis-Nanoarchaeum equitans.</title>
        <authorList>
            <person name="Podar M."/>
            <person name="Anderson I."/>
            <person name="Makarova K.S."/>
            <person name="Elkins J.G."/>
            <person name="Ivanova N."/>
            <person name="Wall M.A."/>
            <person name="Lykidis A."/>
            <person name="Mavromatis K."/>
            <person name="Sun H."/>
            <person name="Hudson M.E."/>
            <person name="Chen W."/>
            <person name="Deciu C."/>
            <person name="Hutchison D."/>
            <person name="Eads J.R."/>
            <person name="Anderson A."/>
            <person name="Fernandes F."/>
            <person name="Szeto E."/>
            <person name="Lapidus A."/>
            <person name="Kyrpides N.C."/>
            <person name="Saier M.H. Jr."/>
            <person name="Richardson P.M."/>
            <person name="Rachel R."/>
            <person name="Huber H."/>
            <person name="Eisen J.A."/>
            <person name="Koonin E.V."/>
            <person name="Keller M."/>
            <person name="Stetter K.O."/>
        </authorList>
    </citation>
    <scope>NUCLEOTIDE SEQUENCE [LARGE SCALE GENOMIC DNA]</scope>
    <source>
        <strain>KIN4/I / DSM 18386 / JCM 14125</strain>
    </source>
</reference>
<proteinExistence type="inferred from homology"/>
<dbReference type="EC" id="1.18.1.2" evidence="1"/>
<dbReference type="EMBL" id="CP000816">
    <property type="protein sequence ID" value="ABU81799.1"/>
    <property type="molecule type" value="Genomic_DNA"/>
</dbReference>
<dbReference type="RefSeq" id="WP_011998651.1">
    <property type="nucleotide sequence ID" value="NC_009776.1"/>
</dbReference>
<dbReference type="SMR" id="A8AA47"/>
<dbReference type="STRING" id="453591.Igni_0617"/>
<dbReference type="GeneID" id="5562794"/>
<dbReference type="KEGG" id="iho:Igni_0617"/>
<dbReference type="eggNOG" id="arCOG01296">
    <property type="taxonomic scope" value="Archaea"/>
</dbReference>
<dbReference type="HOGENOM" id="CLU_031864_5_5_2"/>
<dbReference type="OrthoDB" id="27922at2157"/>
<dbReference type="PhylomeDB" id="A8AA47"/>
<dbReference type="Proteomes" id="UP000000262">
    <property type="component" value="Chromosome"/>
</dbReference>
<dbReference type="GO" id="GO:0004324">
    <property type="term" value="F:ferredoxin-NADP+ reductase activity"/>
    <property type="evidence" value="ECO:0007669"/>
    <property type="project" value="UniProtKB-UniRule"/>
</dbReference>
<dbReference type="GO" id="GO:0050660">
    <property type="term" value="F:flavin adenine dinucleotide binding"/>
    <property type="evidence" value="ECO:0007669"/>
    <property type="project" value="UniProtKB-UniRule"/>
</dbReference>
<dbReference type="GO" id="GO:0050661">
    <property type="term" value="F:NADP binding"/>
    <property type="evidence" value="ECO:0007669"/>
    <property type="project" value="UniProtKB-UniRule"/>
</dbReference>
<dbReference type="Gene3D" id="3.50.50.60">
    <property type="entry name" value="FAD/NAD(P)-binding domain"/>
    <property type="match status" value="2"/>
</dbReference>
<dbReference type="HAMAP" id="MF_01685">
    <property type="entry name" value="FENR2"/>
    <property type="match status" value="1"/>
</dbReference>
<dbReference type="InterPro" id="IPR036188">
    <property type="entry name" value="FAD/NAD-bd_sf"/>
</dbReference>
<dbReference type="InterPro" id="IPR023753">
    <property type="entry name" value="FAD/NAD-binding_dom"/>
</dbReference>
<dbReference type="InterPro" id="IPR022890">
    <property type="entry name" value="Fd--NADP_Rdtase_type_2"/>
</dbReference>
<dbReference type="InterPro" id="IPR050097">
    <property type="entry name" value="Ferredoxin-NADP_redctase_2"/>
</dbReference>
<dbReference type="PANTHER" id="PTHR48105">
    <property type="entry name" value="THIOREDOXIN REDUCTASE 1-RELATED-RELATED"/>
    <property type="match status" value="1"/>
</dbReference>
<dbReference type="Pfam" id="PF07992">
    <property type="entry name" value="Pyr_redox_2"/>
    <property type="match status" value="1"/>
</dbReference>
<dbReference type="PRINTS" id="PR00368">
    <property type="entry name" value="FADPNR"/>
</dbReference>
<dbReference type="PRINTS" id="PR00469">
    <property type="entry name" value="PNDRDTASEII"/>
</dbReference>
<dbReference type="SUPFAM" id="SSF51905">
    <property type="entry name" value="FAD/NAD(P)-binding domain"/>
    <property type="match status" value="1"/>
</dbReference>
<keyword id="KW-0274">FAD</keyword>
<keyword id="KW-0285">Flavoprotein</keyword>
<keyword id="KW-0521">NADP</keyword>
<keyword id="KW-0560">Oxidoreductase</keyword>
<keyword id="KW-1185">Reference proteome</keyword>
<evidence type="ECO:0000255" key="1">
    <source>
        <dbReference type="HAMAP-Rule" id="MF_01685"/>
    </source>
</evidence>